<proteinExistence type="inferred from homology"/>
<feature type="chain" id="PRO_0000118099" description="NADH-ubiquinone oxidoreductase chain 5">
    <location>
        <begin position="1"/>
        <end position="594"/>
    </location>
</feature>
<feature type="transmembrane region" description="Helical" evidence="3">
    <location>
        <begin position="1"/>
        <end position="21"/>
    </location>
</feature>
<feature type="transmembrane region" description="Helical" evidence="3">
    <location>
        <begin position="43"/>
        <end position="63"/>
    </location>
</feature>
<feature type="transmembrane region" description="Helical" evidence="3">
    <location>
        <begin position="87"/>
        <end position="107"/>
    </location>
</feature>
<feature type="transmembrane region" description="Helical" evidence="3">
    <location>
        <begin position="114"/>
        <end position="134"/>
    </location>
</feature>
<feature type="transmembrane region" description="Helical" evidence="3">
    <location>
        <begin position="137"/>
        <end position="157"/>
    </location>
</feature>
<feature type="transmembrane region" description="Helical" evidence="3">
    <location>
        <begin position="171"/>
        <end position="191"/>
    </location>
</feature>
<feature type="transmembrane region" description="Helical" evidence="3">
    <location>
        <begin position="211"/>
        <end position="233"/>
    </location>
</feature>
<feature type="transmembrane region" description="Helical" evidence="3">
    <location>
        <begin position="241"/>
        <end position="261"/>
    </location>
</feature>
<feature type="transmembrane region" description="Helical" evidence="3">
    <location>
        <begin position="272"/>
        <end position="292"/>
    </location>
</feature>
<feature type="transmembrane region" description="Helical" evidence="3">
    <location>
        <begin position="301"/>
        <end position="320"/>
    </location>
</feature>
<feature type="transmembrane region" description="Helical" evidence="3">
    <location>
        <begin position="325"/>
        <end position="347"/>
    </location>
</feature>
<feature type="transmembrane region" description="Helical" evidence="3">
    <location>
        <begin position="366"/>
        <end position="386"/>
    </location>
</feature>
<feature type="transmembrane region" description="Helical" evidence="3">
    <location>
        <begin position="409"/>
        <end position="429"/>
    </location>
</feature>
<feature type="transmembrane region" description="Helical" evidence="3">
    <location>
        <begin position="457"/>
        <end position="477"/>
    </location>
</feature>
<feature type="transmembrane region" description="Helical" evidence="3">
    <location>
        <begin position="486"/>
        <end position="506"/>
    </location>
</feature>
<gene>
    <name type="primary">MT-ND5</name>
    <name type="synonym">MTND5</name>
    <name type="synonym">NADH5</name>
    <name type="synonym">ND5</name>
</gene>
<comment type="function">
    <text evidence="1">Core subunit of the mitochondrial membrane respiratory chain NADH dehydrogenase (Complex I) which catalyzes electron transfer from NADH through the respiratory chain, using ubiquinone as an electron acceptor. Essential for the catalytic activity and assembly of complex I.</text>
</comment>
<comment type="catalytic activity">
    <reaction evidence="1">
        <text>a ubiquinone + NADH + 5 H(+)(in) = a ubiquinol + NAD(+) + 4 H(+)(out)</text>
        <dbReference type="Rhea" id="RHEA:29091"/>
        <dbReference type="Rhea" id="RHEA-COMP:9565"/>
        <dbReference type="Rhea" id="RHEA-COMP:9566"/>
        <dbReference type="ChEBI" id="CHEBI:15378"/>
        <dbReference type="ChEBI" id="CHEBI:16389"/>
        <dbReference type="ChEBI" id="CHEBI:17976"/>
        <dbReference type="ChEBI" id="CHEBI:57540"/>
        <dbReference type="ChEBI" id="CHEBI:57945"/>
        <dbReference type="EC" id="7.1.1.2"/>
    </reaction>
</comment>
<comment type="subunit">
    <text evidence="2">Core subunit of respiratory chain NADH dehydrogenase (Complex I) which is composed of 45 different subunits.</text>
</comment>
<comment type="subcellular location">
    <subcellularLocation>
        <location evidence="2">Mitochondrion inner membrane</location>
        <topology evidence="3">Multi-pass membrane protein</topology>
    </subcellularLocation>
</comment>
<comment type="similarity">
    <text evidence="4">Belongs to the complex I subunit 5 family.</text>
</comment>
<name>NU5M_HIPAM</name>
<reference key="1">
    <citation type="journal article" date="1998" name="Proc. R. Soc. B">
        <title>Analyses of mitochondrial genomes strongly support a hippopotamus-whale clade.</title>
        <authorList>
            <person name="Ursing B.M."/>
            <person name="Arnason U."/>
        </authorList>
    </citation>
    <scope>NUCLEOTIDE SEQUENCE [GENOMIC DNA]</scope>
</reference>
<organism>
    <name type="scientific">Hippopotamus amphibius</name>
    <name type="common">Hippopotamus</name>
    <dbReference type="NCBI Taxonomy" id="9833"/>
    <lineage>
        <taxon>Eukaryota</taxon>
        <taxon>Metazoa</taxon>
        <taxon>Chordata</taxon>
        <taxon>Craniata</taxon>
        <taxon>Vertebrata</taxon>
        <taxon>Euteleostomi</taxon>
        <taxon>Mammalia</taxon>
        <taxon>Eutheria</taxon>
        <taxon>Laurasiatheria</taxon>
        <taxon>Artiodactyla</taxon>
        <taxon>Whippomorpha</taxon>
        <taxon>Ancodonta</taxon>
        <taxon>Hippopotamidae</taxon>
        <taxon>Hippopotamus</taxon>
    </lineage>
</organism>
<accession>Q9ZZY1</accession>
<geneLocation type="mitochondrion"/>
<protein>
    <recommendedName>
        <fullName>NADH-ubiquinone oxidoreductase chain 5</fullName>
        <ecNumber evidence="1">7.1.1.2</ecNumber>
    </recommendedName>
    <alternativeName>
        <fullName>NADH dehydrogenase subunit 5</fullName>
    </alternativeName>
</protein>
<dbReference type="EC" id="7.1.1.2" evidence="1"/>
<dbReference type="EMBL" id="AJ010957">
    <property type="protein sequence ID" value="CAA09438.1"/>
    <property type="molecule type" value="Genomic_DNA"/>
</dbReference>
<dbReference type="RefSeq" id="NP_008800.1">
    <property type="nucleotide sequence ID" value="NC_000889.1"/>
</dbReference>
<dbReference type="SMR" id="Q9ZZY1"/>
<dbReference type="GeneID" id="808681"/>
<dbReference type="CTD" id="4540"/>
<dbReference type="GO" id="GO:0005743">
    <property type="term" value="C:mitochondrial inner membrane"/>
    <property type="evidence" value="ECO:0000250"/>
    <property type="project" value="UniProtKB"/>
</dbReference>
<dbReference type="GO" id="GO:0008137">
    <property type="term" value="F:NADH dehydrogenase (ubiquinone) activity"/>
    <property type="evidence" value="ECO:0000250"/>
    <property type="project" value="UniProtKB"/>
</dbReference>
<dbReference type="GO" id="GO:0015990">
    <property type="term" value="P:electron transport coupled proton transport"/>
    <property type="evidence" value="ECO:0007669"/>
    <property type="project" value="TreeGrafter"/>
</dbReference>
<dbReference type="GO" id="GO:0006120">
    <property type="term" value="P:mitochondrial electron transport, NADH to ubiquinone"/>
    <property type="evidence" value="ECO:0000250"/>
    <property type="project" value="UniProtKB"/>
</dbReference>
<dbReference type="GO" id="GO:0032981">
    <property type="term" value="P:mitochondrial respiratory chain complex I assembly"/>
    <property type="evidence" value="ECO:0000250"/>
    <property type="project" value="UniProtKB"/>
</dbReference>
<dbReference type="InterPro" id="IPR010934">
    <property type="entry name" value="NADH_DH_su5_C"/>
</dbReference>
<dbReference type="InterPro" id="IPR018393">
    <property type="entry name" value="NADHpl_OxRdtase_5_subgr"/>
</dbReference>
<dbReference type="InterPro" id="IPR001750">
    <property type="entry name" value="ND/Mrp_TM"/>
</dbReference>
<dbReference type="InterPro" id="IPR003945">
    <property type="entry name" value="NU5C-like"/>
</dbReference>
<dbReference type="InterPro" id="IPR001516">
    <property type="entry name" value="Proton_antipo_N"/>
</dbReference>
<dbReference type="NCBIfam" id="TIGR01974">
    <property type="entry name" value="NDH_I_L"/>
    <property type="match status" value="1"/>
</dbReference>
<dbReference type="PANTHER" id="PTHR42829">
    <property type="entry name" value="NADH-UBIQUINONE OXIDOREDUCTASE CHAIN 5"/>
    <property type="match status" value="1"/>
</dbReference>
<dbReference type="PANTHER" id="PTHR42829:SF2">
    <property type="entry name" value="NADH-UBIQUINONE OXIDOREDUCTASE CHAIN 5"/>
    <property type="match status" value="1"/>
</dbReference>
<dbReference type="Pfam" id="PF06455">
    <property type="entry name" value="NADH5_C"/>
    <property type="match status" value="1"/>
</dbReference>
<dbReference type="Pfam" id="PF00361">
    <property type="entry name" value="Proton_antipo_M"/>
    <property type="match status" value="1"/>
</dbReference>
<dbReference type="Pfam" id="PF00662">
    <property type="entry name" value="Proton_antipo_N"/>
    <property type="match status" value="1"/>
</dbReference>
<dbReference type="PRINTS" id="PR01434">
    <property type="entry name" value="NADHDHGNASE5"/>
</dbReference>
<sequence>MNLFSSTTLTMLFVLTLPIMMTNTNIYKSDKYPTYVKNTVSSAFLISLVPMIAFTNTGQEMIISNWHWITIQTLKLTLSFKADYFSIVFAPVALFVTWSIMEFSMWYMHSDPHINQFFKYLLLFLITMMILVTANNLFQLFIGWEGVGIMSFLLIGWWHGRTDANTAAIQAILYNRIGDVGFIMAMAWFLSNLNTWDMQQIFMINPTHSNLPLMGLILAATGKSAQFGLHPWLPSAMEGPTPVSALLHSSTMVVAGVFLLIRFYPMMENNNLMQTITMCLGAITTLFTAMCALTQNDIKKIIAFSTSSQLGLMMVTIGINQPHLAFLHICTHAFFKAMLFMCSGSIIHNLNNEQDIRKMGGLFKTMPFTTTTLIVGSMALTGVPFLTGFYSKDLIIEAANTSYSNAWALLITLVATSLTAVYSTRIIFFALLGHPRFPTSTLIHENNPLLLNSLKRLMAGSIFAGFILSHNLPPMTTPLMTMPPYLKMTALAVTMLGFTLAFEITLNTQNLKYKHPTNSFKFSTLLGYFPTIMHRLPPHLSLTASQKLASSLLDSAWLENILPKSMAHAQLKLSTLVSNQKGLMKMYFSIIPYH</sequence>
<keyword id="KW-0249">Electron transport</keyword>
<keyword id="KW-0472">Membrane</keyword>
<keyword id="KW-0496">Mitochondrion</keyword>
<keyword id="KW-0999">Mitochondrion inner membrane</keyword>
<keyword id="KW-0520">NAD</keyword>
<keyword id="KW-0679">Respiratory chain</keyword>
<keyword id="KW-1278">Translocase</keyword>
<keyword id="KW-0812">Transmembrane</keyword>
<keyword id="KW-1133">Transmembrane helix</keyword>
<keyword id="KW-0813">Transport</keyword>
<keyword id="KW-0830">Ubiquinone</keyword>
<evidence type="ECO:0000250" key="1">
    <source>
        <dbReference type="UniProtKB" id="P03915"/>
    </source>
</evidence>
<evidence type="ECO:0000250" key="2">
    <source>
        <dbReference type="UniProtKB" id="P03920"/>
    </source>
</evidence>
<evidence type="ECO:0000255" key="3"/>
<evidence type="ECO:0000305" key="4"/>